<comment type="similarity">
    <text>Belongs to the CT45 family.</text>
</comment>
<proteinExistence type="inferred from homology"/>
<accession>P0DMV1</accession>
<sequence>MTDKTEKVAVDPETVFKRPRECDSPSYQKRQRMALLARKQGAGDSLIAGSAMSKEKKLMTGHAIPPSQLDSQIDDFTGFSKDRMMQKPGSNAPVGGNVTSSFSGDDLECRETAFSPKSQQEINADIKRQLVKELRCVGQKYEKIFEMLEGVQGPTAVRKRFFESIIKEAARCMRRDFVKHLKKKLKRMI</sequence>
<keyword id="KW-1185">Reference proteome</keyword>
<evidence type="ECO:0000305" key="1"/>
<evidence type="ECO:0000312" key="2">
    <source>
        <dbReference type="HGNC" id="HGNC:51261"/>
    </source>
</evidence>
<gene>
    <name evidence="2" type="primary">CT45A8</name>
</gene>
<protein>
    <recommendedName>
        <fullName evidence="2">Cancer/testis antigen family 45 member A8</fullName>
    </recommendedName>
    <alternativeName>
        <fullName evidence="1">Cancer/testis antigen 45A8</fullName>
    </alternativeName>
</protein>
<organism>
    <name type="scientific">Homo sapiens</name>
    <name type="common">Human</name>
    <dbReference type="NCBI Taxonomy" id="9606"/>
    <lineage>
        <taxon>Eukaryota</taxon>
        <taxon>Metazoa</taxon>
        <taxon>Chordata</taxon>
        <taxon>Craniata</taxon>
        <taxon>Vertebrata</taxon>
        <taxon>Euteleostomi</taxon>
        <taxon>Mammalia</taxon>
        <taxon>Eutheria</taxon>
        <taxon>Euarchontoglires</taxon>
        <taxon>Primates</taxon>
        <taxon>Haplorrhini</taxon>
        <taxon>Catarrhini</taxon>
        <taxon>Hominidae</taxon>
        <taxon>Homo</taxon>
    </lineage>
</organism>
<reference key="1">
    <citation type="journal article" date="2005" name="Nature">
        <title>The DNA sequence of the human X chromosome.</title>
        <authorList>
            <person name="Ross M.T."/>
            <person name="Grafham D.V."/>
            <person name="Coffey A.J."/>
            <person name="Scherer S."/>
            <person name="McLay K."/>
            <person name="Muzny D."/>
            <person name="Platzer M."/>
            <person name="Howell G.R."/>
            <person name="Burrows C."/>
            <person name="Bird C.P."/>
            <person name="Frankish A."/>
            <person name="Lovell F.L."/>
            <person name="Howe K.L."/>
            <person name="Ashurst J.L."/>
            <person name="Fulton R.S."/>
            <person name="Sudbrak R."/>
            <person name="Wen G."/>
            <person name="Jones M.C."/>
            <person name="Hurles M.E."/>
            <person name="Andrews T.D."/>
            <person name="Scott C.E."/>
            <person name="Searle S."/>
            <person name="Ramser J."/>
            <person name="Whittaker A."/>
            <person name="Deadman R."/>
            <person name="Carter N.P."/>
            <person name="Hunt S.E."/>
            <person name="Chen R."/>
            <person name="Cree A."/>
            <person name="Gunaratne P."/>
            <person name="Havlak P."/>
            <person name="Hodgson A."/>
            <person name="Metzker M.L."/>
            <person name="Richards S."/>
            <person name="Scott G."/>
            <person name="Steffen D."/>
            <person name="Sodergren E."/>
            <person name="Wheeler D.A."/>
            <person name="Worley K.C."/>
            <person name="Ainscough R."/>
            <person name="Ambrose K.D."/>
            <person name="Ansari-Lari M.A."/>
            <person name="Aradhya S."/>
            <person name="Ashwell R.I."/>
            <person name="Babbage A.K."/>
            <person name="Bagguley C.L."/>
            <person name="Ballabio A."/>
            <person name="Banerjee R."/>
            <person name="Barker G.E."/>
            <person name="Barlow K.F."/>
            <person name="Barrett I.P."/>
            <person name="Bates K.N."/>
            <person name="Beare D.M."/>
            <person name="Beasley H."/>
            <person name="Beasley O."/>
            <person name="Beck A."/>
            <person name="Bethel G."/>
            <person name="Blechschmidt K."/>
            <person name="Brady N."/>
            <person name="Bray-Allen S."/>
            <person name="Bridgeman A.M."/>
            <person name="Brown A.J."/>
            <person name="Brown M.J."/>
            <person name="Bonnin D."/>
            <person name="Bruford E.A."/>
            <person name="Buhay C."/>
            <person name="Burch P."/>
            <person name="Burford D."/>
            <person name="Burgess J."/>
            <person name="Burrill W."/>
            <person name="Burton J."/>
            <person name="Bye J.M."/>
            <person name="Carder C."/>
            <person name="Carrel L."/>
            <person name="Chako J."/>
            <person name="Chapman J.C."/>
            <person name="Chavez D."/>
            <person name="Chen E."/>
            <person name="Chen G."/>
            <person name="Chen Y."/>
            <person name="Chen Z."/>
            <person name="Chinault C."/>
            <person name="Ciccodicola A."/>
            <person name="Clark S.Y."/>
            <person name="Clarke G."/>
            <person name="Clee C.M."/>
            <person name="Clegg S."/>
            <person name="Clerc-Blankenburg K."/>
            <person name="Clifford K."/>
            <person name="Cobley V."/>
            <person name="Cole C.G."/>
            <person name="Conquer J.S."/>
            <person name="Corby N."/>
            <person name="Connor R.E."/>
            <person name="David R."/>
            <person name="Davies J."/>
            <person name="Davis C."/>
            <person name="Davis J."/>
            <person name="Delgado O."/>
            <person name="Deshazo D."/>
            <person name="Dhami P."/>
            <person name="Ding Y."/>
            <person name="Dinh H."/>
            <person name="Dodsworth S."/>
            <person name="Draper H."/>
            <person name="Dugan-Rocha S."/>
            <person name="Dunham A."/>
            <person name="Dunn M."/>
            <person name="Durbin K.J."/>
            <person name="Dutta I."/>
            <person name="Eades T."/>
            <person name="Ellwood M."/>
            <person name="Emery-Cohen A."/>
            <person name="Errington H."/>
            <person name="Evans K.L."/>
            <person name="Faulkner L."/>
            <person name="Francis F."/>
            <person name="Frankland J."/>
            <person name="Fraser A.E."/>
            <person name="Galgoczy P."/>
            <person name="Gilbert J."/>
            <person name="Gill R."/>
            <person name="Gloeckner G."/>
            <person name="Gregory S.G."/>
            <person name="Gribble S."/>
            <person name="Griffiths C."/>
            <person name="Grocock R."/>
            <person name="Gu Y."/>
            <person name="Gwilliam R."/>
            <person name="Hamilton C."/>
            <person name="Hart E.A."/>
            <person name="Hawes A."/>
            <person name="Heath P.D."/>
            <person name="Heitmann K."/>
            <person name="Hennig S."/>
            <person name="Hernandez J."/>
            <person name="Hinzmann B."/>
            <person name="Ho S."/>
            <person name="Hoffs M."/>
            <person name="Howden P.J."/>
            <person name="Huckle E.J."/>
            <person name="Hume J."/>
            <person name="Hunt P.J."/>
            <person name="Hunt A.R."/>
            <person name="Isherwood J."/>
            <person name="Jacob L."/>
            <person name="Johnson D."/>
            <person name="Jones S."/>
            <person name="de Jong P.J."/>
            <person name="Joseph S.S."/>
            <person name="Keenan S."/>
            <person name="Kelly S."/>
            <person name="Kershaw J.K."/>
            <person name="Khan Z."/>
            <person name="Kioschis P."/>
            <person name="Klages S."/>
            <person name="Knights A.J."/>
            <person name="Kosiura A."/>
            <person name="Kovar-Smith C."/>
            <person name="Laird G.K."/>
            <person name="Langford C."/>
            <person name="Lawlor S."/>
            <person name="Leversha M."/>
            <person name="Lewis L."/>
            <person name="Liu W."/>
            <person name="Lloyd C."/>
            <person name="Lloyd D.M."/>
            <person name="Loulseged H."/>
            <person name="Loveland J.E."/>
            <person name="Lovell J.D."/>
            <person name="Lozado R."/>
            <person name="Lu J."/>
            <person name="Lyne R."/>
            <person name="Ma J."/>
            <person name="Maheshwari M."/>
            <person name="Matthews L.H."/>
            <person name="McDowall J."/>
            <person name="McLaren S."/>
            <person name="McMurray A."/>
            <person name="Meidl P."/>
            <person name="Meitinger T."/>
            <person name="Milne S."/>
            <person name="Miner G."/>
            <person name="Mistry S.L."/>
            <person name="Morgan M."/>
            <person name="Morris S."/>
            <person name="Mueller I."/>
            <person name="Mullikin J.C."/>
            <person name="Nguyen N."/>
            <person name="Nordsiek G."/>
            <person name="Nyakatura G."/>
            <person name="O'dell C.N."/>
            <person name="Okwuonu G."/>
            <person name="Palmer S."/>
            <person name="Pandian R."/>
            <person name="Parker D."/>
            <person name="Parrish J."/>
            <person name="Pasternak S."/>
            <person name="Patel D."/>
            <person name="Pearce A.V."/>
            <person name="Pearson D.M."/>
            <person name="Pelan S.E."/>
            <person name="Perez L."/>
            <person name="Porter K.M."/>
            <person name="Ramsey Y."/>
            <person name="Reichwald K."/>
            <person name="Rhodes S."/>
            <person name="Ridler K.A."/>
            <person name="Schlessinger D."/>
            <person name="Schueler M.G."/>
            <person name="Sehra H.K."/>
            <person name="Shaw-Smith C."/>
            <person name="Shen H."/>
            <person name="Sheridan E.M."/>
            <person name="Shownkeen R."/>
            <person name="Skuce C.D."/>
            <person name="Smith M.L."/>
            <person name="Sotheran E.C."/>
            <person name="Steingruber H.E."/>
            <person name="Steward C.A."/>
            <person name="Storey R."/>
            <person name="Swann R.M."/>
            <person name="Swarbreck D."/>
            <person name="Tabor P.E."/>
            <person name="Taudien S."/>
            <person name="Taylor T."/>
            <person name="Teague B."/>
            <person name="Thomas K."/>
            <person name="Thorpe A."/>
            <person name="Timms K."/>
            <person name="Tracey A."/>
            <person name="Trevanion S."/>
            <person name="Tromans A.C."/>
            <person name="d'Urso M."/>
            <person name="Verduzco D."/>
            <person name="Villasana D."/>
            <person name="Waldron L."/>
            <person name="Wall M."/>
            <person name="Wang Q."/>
            <person name="Warren J."/>
            <person name="Warry G.L."/>
            <person name="Wei X."/>
            <person name="West A."/>
            <person name="Whitehead S.L."/>
            <person name="Whiteley M.N."/>
            <person name="Wilkinson J.E."/>
            <person name="Willey D.L."/>
            <person name="Williams G."/>
            <person name="Williams L."/>
            <person name="Williamson A."/>
            <person name="Williamson H."/>
            <person name="Wilming L."/>
            <person name="Woodmansey R.L."/>
            <person name="Wray P.W."/>
            <person name="Yen J."/>
            <person name="Zhang J."/>
            <person name="Zhou J."/>
            <person name="Zoghbi H."/>
            <person name="Zorilla S."/>
            <person name="Buck D."/>
            <person name="Reinhardt R."/>
            <person name="Poustka A."/>
            <person name="Rosenthal A."/>
            <person name="Lehrach H."/>
            <person name="Meindl A."/>
            <person name="Minx P.J."/>
            <person name="Hillier L.W."/>
            <person name="Willard H.F."/>
            <person name="Wilson R.K."/>
            <person name="Waterston R.H."/>
            <person name="Rice C.M."/>
            <person name="Vaudin M."/>
            <person name="Coulson A."/>
            <person name="Nelson D.L."/>
            <person name="Weinstock G."/>
            <person name="Sulston J.E."/>
            <person name="Durbin R.M."/>
            <person name="Hubbard T."/>
            <person name="Gibbs R.A."/>
            <person name="Beck S."/>
            <person name="Rogers J."/>
            <person name="Bentley D.R."/>
        </authorList>
    </citation>
    <scope>NUCLEOTIDE SEQUENCE [LARGE SCALE GENOMIC DNA]</scope>
</reference>
<dbReference type="EMBL" id="AC240441">
    <property type="status" value="NOT_ANNOTATED_CDS"/>
    <property type="molecule type" value="Genomic_DNA"/>
</dbReference>
<dbReference type="CCDS" id="CCDS76033.1"/>
<dbReference type="RefSeq" id="NP_001278464.1">
    <property type="nucleotide sequence ID" value="NM_001291535.1"/>
</dbReference>
<dbReference type="RefSeq" id="NP_001278469.1">
    <property type="nucleotide sequence ID" value="NM_001291540.2"/>
</dbReference>
<dbReference type="RefSeq" id="NP_001308200.1">
    <property type="nucleotide sequence ID" value="NM_001321271.1"/>
</dbReference>
<dbReference type="RefSeq" id="NP_689795.4">
    <property type="nucleotide sequence ID" value="NM_152582.6"/>
</dbReference>
<dbReference type="RefSeq" id="XP_006724846.1">
    <property type="nucleotide sequence ID" value="XM_006724783.2"/>
</dbReference>
<dbReference type="RefSeq" id="XP_006724859.1">
    <property type="nucleotide sequence ID" value="XM_006724796.2"/>
</dbReference>
<dbReference type="RefSeq" id="XP_006724862.1">
    <property type="nucleotide sequence ID" value="XM_006724799.2"/>
</dbReference>
<dbReference type="RefSeq" id="XP_011529543.1">
    <property type="nucleotide sequence ID" value="XM_011531241.3"/>
</dbReference>
<dbReference type="RefSeq" id="XP_011529691.1">
    <property type="nucleotide sequence ID" value="XM_011531389.2"/>
</dbReference>
<dbReference type="SMR" id="P0DMV1"/>
<dbReference type="IntAct" id="P0DMV1">
    <property type="interactions" value="3"/>
</dbReference>
<dbReference type="iPTMnet" id="P0DMV1"/>
<dbReference type="PhosphoSitePlus" id="P0DMV1"/>
<dbReference type="BioMuta" id="CT45A8"/>
<dbReference type="jPOST" id="P0DMV1"/>
<dbReference type="MassIVE" id="P0DMV1"/>
<dbReference type="PeptideAtlas" id="P0DMV1"/>
<dbReference type="Pumba" id="P0DMV1"/>
<dbReference type="Antibodypedia" id="75731">
    <property type="antibodies" value="37 antibodies from 6 providers"/>
</dbReference>
<dbReference type="DNASU" id="102723737"/>
<dbReference type="Ensembl" id="ENST00000611438.1">
    <property type="protein sequence ID" value="ENSP00000480644.1"/>
    <property type="gene ID" value="ENSG00000278085.5"/>
</dbReference>
<dbReference type="Ensembl" id="ENST00000611660.5">
    <property type="protein sequence ID" value="ENSP00000481184.1"/>
    <property type="gene ID" value="ENSG00000278085.5"/>
</dbReference>
<dbReference type="GeneID" id="102723680"/>
<dbReference type="GeneID" id="102723737"/>
<dbReference type="GeneID" id="728911"/>
<dbReference type="KEGG" id="hsa:102723680"/>
<dbReference type="KEGG" id="hsa:102723737"/>
<dbReference type="KEGG" id="hsa:728911"/>
<dbReference type="MANE-Select" id="ENST00000611660.5">
    <property type="protein sequence ID" value="ENSP00000481184.1"/>
    <property type="RefSeq nucleotide sequence ID" value="NM_001291535.1"/>
    <property type="RefSeq protein sequence ID" value="NP_001278464.1"/>
</dbReference>
<dbReference type="AGR" id="HGNC:28400"/>
<dbReference type="AGR" id="HGNC:51261"/>
<dbReference type="AGR" id="HGNC:51262"/>
<dbReference type="CTD" id="102723680"/>
<dbReference type="CTD" id="102723737"/>
<dbReference type="CTD" id="728911"/>
<dbReference type="DisGeNET" id="102723680"/>
<dbReference type="DisGeNET" id="102723737"/>
<dbReference type="DisGeNET" id="728911"/>
<dbReference type="GeneCards" id="CT45A8"/>
<dbReference type="HGNC" id="HGNC:51261">
    <property type="gene designation" value="CT45A8"/>
</dbReference>
<dbReference type="HPA" id="ENSG00000278085">
    <property type="expression patterns" value="Tissue enriched (testis)"/>
</dbReference>
<dbReference type="neXtProt" id="NX_P0DMV1"/>
<dbReference type="OpenTargets" id="ENSG00000271449"/>
<dbReference type="VEuPathDB" id="HostDB:ENSG00000278085"/>
<dbReference type="InParanoid" id="P0DMV1"/>
<dbReference type="OMA" id="FAAGHQK"/>
<dbReference type="OrthoDB" id="9520782at2759"/>
<dbReference type="PAN-GO" id="P0DMV1">
    <property type="GO annotations" value="2 GO annotations based on evolutionary models"/>
</dbReference>
<dbReference type="PhylomeDB" id="P0DMV1"/>
<dbReference type="PathwayCommons" id="P0DMV1"/>
<dbReference type="BioGRID-ORCS" id="102723680">
    <property type="hits" value="4 hits in 86 CRISPR screens"/>
</dbReference>
<dbReference type="BioGRID-ORCS" id="102723737">
    <property type="hits" value="2 hits in 4 CRISPR screens"/>
</dbReference>
<dbReference type="BioGRID-ORCS" id="728911">
    <property type="hits" value="13 hits in 215 CRISPR screens"/>
</dbReference>
<dbReference type="Pharos" id="P0DMV1">
    <property type="development level" value="Tdark"/>
</dbReference>
<dbReference type="PRO" id="PR:P0DMV1"/>
<dbReference type="Proteomes" id="UP000005640">
    <property type="component" value="Chromosome X"/>
</dbReference>
<dbReference type="RNAct" id="P0DMV1">
    <property type="molecule type" value="protein"/>
</dbReference>
<dbReference type="Bgee" id="ENSG00000278085">
    <property type="expression patterns" value="Expressed in male germ line stem cell (sensu Vertebrata) in testis and 17 other cell types or tissues"/>
</dbReference>
<dbReference type="InterPro" id="IPR029307">
    <property type="entry name" value="INT_SG_DDX_CT_C"/>
</dbReference>
<dbReference type="InterPro" id="IPR051113">
    <property type="entry name" value="Integrator_subunit6"/>
</dbReference>
<dbReference type="PANTHER" id="PTHR12957">
    <property type="entry name" value="DEAD/H BOX POLYPEPTIDE 26/DICE1-RELATED"/>
    <property type="match status" value="1"/>
</dbReference>
<dbReference type="PANTHER" id="PTHR12957:SF2">
    <property type="entry name" value="INTEGRATOR COMPLEX SUBUNIT 6"/>
    <property type="match status" value="1"/>
</dbReference>
<dbReference type="Pfam" id="PF15300">
    <property type="entry name" value="INT_SG_DDX_CT_C"/>
    <property type="match status" value="1"/>
</dbReference>
<feature type="chain" id="PRO_0000433030" description="Cancer/testis antigen family 45 member A8">
    <location>
        <begin position="1"/>
        <end position="189"/>
    </location>
</feature>
<name>CT458_HUMAN</name>